<accession>P81509</accession>
<name>SLB_CROHD</name>
<sequence>DCPSDWSSYEGHCYRVFQQEMTWDDAEKFCTQQHTGGHLVSFRSSEEVDFLVSILKFDLFWMGWRDIWNERRLQWSDGTKVNYKAWSAEPECIVCRATDNQWLSTSCSKTHNVVCKF</sequence>
<keyword id="KW-0903">Direct protein sequencing</keyword>
<keyword id="KW-1015">Disulfide bond</keyword>
<keyword id="KW-1199">Hemostasis impairing toxin</keyword>
<keyword id="KW-1201">Platelet aggregation inhibiting toxin</keyword>
<keyword id="KW-0964">Secreted</keyword>
<keyword id="KW-0800">Toxin</keyword>
<dbReference type="SMR" id="P81509"/>
<dbReference type="GO" id="GO:0005576">
    <property type="term" value="C:extracellular region"/>
    <property type="evidence" value="ECO:0000314"/>
    <property type="project" value="UniProtKB"/>
</dbReference>
<dbReference type="GO" id="GO:0090729">
    <property type="term" value="F:toxin activity"/>
    <property type="evidence" value="ECO:0007669"/>
    <property type="project" value="UniProtKB-KW"/>
</dbReference>
<dbReference type="GO" id="GO:0044477">
    <property type="term" value="P:venom-mediated suppression of platelet aggregation"/>
    <property type="evidence" value="ECO:0000314"/>
    <property type="project" value="UniProtKB"/>
</dbReference>
<dbReference type="FunFam" id="3.10.100.10:FF:000087">
    <property type="entry name" value="Snaclec rhodocetin subunit delta"/>
    <property type="match status" value="1"/>
</dbReference>
<dbReference type="Gene3D" id="3.10.100.10">
    <property type="entry name" value="Mannose-Binding Protein A, subunit A"/>
    <property type="match status" value="1"/>
</dbReference>
<dbReference type="InterPro" id="IPR001304">
    <property type="entry name" value="C-type_lectin-like"/>
</dbReference>
<dbReference type="InterPro" id="IPR016186">
    <property type="entry name" value="C-type_lectin-like/link_sf"/>
</dbReference>
<dbReference type="InterPro" id="IPR050111">
    <property type="entry name" value="C-type_lectin/snaclec_domain"/>
</dbReference>
<dbReference type="InterPro" id="IPR018378">
    <property type="entry name" value="C-type_lectin_CS"/>
</dbReference>
<dbReference type="InterPro" id="IPR016187">
    <property type="entry name" value="CTDL_fold"/>
</dbReference>
<dbReference type="PANTHER" id="PTHR22803">
    <property type="entry name" value="MANNOSE, PHOSPHOLIPASE, LECTIN RECEPTOR RELATED"/>
    <property type="match status" value="1"/>
</dbReference>
<dbReference type="Pfam" id="PF00059">
    <property type="entry name" value="Lectin_C"/>
    <property type="match status" value="1"/>
</dbReference>
<dbReference type="SMART" id="SM00034">
    <property type="entry name" value="CLECT"/>
    <property type="match status" value="1"/>
</dbReference>
<dbReference type="SUPFAM" id="SSF56436">
    <property type="entry name" value="C-type lectin-like"/>
    <property type="match status" value="1"/>
</dbReference>
<dbReference type="PROSITE" id="PS00615">
    <property type="entry name" value="C_TYPE_LECTIN_1"/>
    <property type="match status" value="1"/>
</dbReference>
<dbReference type="PROSITE" id="PS50041">
    <property type="entry name" value="C_TYPE_LECTIN_2"/>
    <property type="match status" value="1"/>
</dbReference>
<reference key="1">
    <citation type="journal article" date="1996" name="Biochemistry">
        <title>Binding of a novel 50-kilodalton alboaggregin from Trimeresurus albolabris and related viper venom proteins to the platelet membrane glycoprotein Ib-IX-V complex. Effect on platelet aggregation and glycoprotein Ib-mediated platelet activation.</title>
        <authorList>
            <person name="Andrews R.K."/>
            <person name="Kroll M.H."/>
            <person name="Ward C.M."/>
            <person name="Rose J.W."/>
            <person name="Scarborough R.M."/>
            <person name="Smith A.I."/>
            <person name="Lopez J.A."/>
            <person name="Berndt M.C."/>
        </authorList>
    </citation>
    <scope>PROTEIN SEQUENCE</scope>
    <source>
        <tissue>Venom</tissue>
    </source>
</reference>
<proteinExistence type="evidence at protein level"/>
<evidence type="ECO:0000255" key="1">
    <source>
        <dbReference type="PROSITE-ProRule" id="PRU00040"/>
    </source>
</evidence>
<evidence type="ECO:0000305" key="2"/>
<comment type="function">
    <text>Binds to the subunit GPIbalpha (GP1BA) of the platelet GPIb/V/IX receptor system. It inhibits ristocetin- and vWF-induced platelet aggregation in platelet-rich plasma by inhibiting the binding of vWF to GPIbalpha.</text>
</comment>
<comment type="subunit">
    <text>Heterodimer of subunits alpha and beta; disulfide-linked.</text>
</comment>
<comment type="subcellular location">
    <subcellularLocation>
        <location>Secreted</location>
    </subcellularLocation>
</comment>
<comment type="tissue specificity">
    <text>Expressed by the venom gland.</text>
</comment>
<comment type="similarity">
    <text evidence="2">Belongs to the snaclec family.</text>
</comment>
<feature type="chain" id="PRO_0000046700" description="Snaclec CHH-B subunit beta">
    <location>
        <begin position="1"/>
        <end position="117"/>
    </location>
</feature>
<feature type="domain" description="C-type lectin" evidence="1">
    <location>
        <begin position="9"/>
        <end position="116"/>
    </location>
</feature>
<feature type="disulfide bond" evidence="1">
    <location>
        <begin position="2"/>
        <end position="13"/>
    </location>
</feature>
<feature type="disulfide bond" evidence="1">
    <location>
        <begin position="30"/>
        <end position="115"/>
    </location>
</feature>
<feature type="disulfide bond" evidence="1">
    <location>
        <begin position="92"/>
        <end position="107"/>
    </location>
</feature>
<organism>
    <name type="scientific">Crotalus horridus</name>
    <name type="common">Timber rattlesnake</name>
    <dbReference type="NCBI Taxonomy" id="35024"/>
    <lineage>
        <taxon>Eukaryota</taxon>
        <taxon>Metazoa</taxon>
        <taxon>Chordata</taxon>
        <taxon>Craniata</taxon>
        <taxon>Vertebrata</taxon>
        <taxon>Euteleostomi</taxon>
        <taxon>Lepidosauria</taxon>
        <taxon>Squamata</taxon>
        <taxon>Bifurcata</taxon>
        <taxon>Unidentata</taxon>
        <taxon>Episquamata</taxon>
        <taxon>Toxicofera</taxon>
        <taxon>Serpentes</taxon>
        <taxon>Colubroidea</taxon>
        <taxon>Viperidae</taxon>
        <taxon>Crotalinae</taxon>
        <taxon>Crotalus</taxon>
    </lineage>
</organism>
<protein>
    <recommendedName>
        <fullName>Snaclec CHH-B subunit beta</fullName>
    </recommendedName>
</protein>